<evidence type="ECO:0000255" key="1">
    <source>
        <dbReference type="HAMAP-Rule" id="MF_01818"/>
    </source>
</evidence>
<dbReference type="EC" id="3.1.-.-" evidence="1"/>
<dbReference type="EMBL" id="CP000857">
    <property type="protein sequence ID" value="ACN45559.1"/>
    <property type="molecule type" value="Genomic_DNA"/>
</dbReference>
<dbReference type="RefSeq" id="WP_000419100.1">
    <property type="nucleotide sequence ID" value="NC_012125.1"/>
</dbReference>
<dbReference type="SMR" id="C0Q055"/>
<dbReference type="KEGG" id="sei:SPC_1398"/>
<dbReference type="HOGENOM" id="CLU_031317_2_0_6"/>
<dbReference type="Proteomes" id="UP000001599">
    <property type="component" value="Chromosome"/>
</dbReference>
<dbReference type="GO" id="GO:0042781">
    <property type="term" value="F:3'-tRNA processing endoribonuclease activity"/>
    <property type="evidence" value="ECO:0007669"/>
    <property type="project" value="TreeGrafter"/>
</dbReference>
<dbReference type="GO" id="GO:0004527">
    <property type="term" value="F:exonuclease activity"/>
    <property type="evidence" value="ECO:0007669"/>
    <property type="project" value="UniProtKB-UniRule"/>
</dbReference>
<dbReference type="GO" id="GO:0008270">
    <property type="term" value="F:zinc ion binding"/>
    <property type="evidence" value="ECO:0007669"/>
    <property type="project" value="UniProtKB-UniRule"/>
</dbReference>
<dbReference type="CDD" id="cd07717">
    <property type="entry name" value="RNaseZ_ZiPD-like_MBL-fold"/>
    <property type="match status" value="1"/>
</dbReference>
<dbReference type="FunFam" id="3.60.15.10:FF:000002">
    <property type="entry name" value="Ribonuclease Z"/>
    <property type="match status" value="1"/>
</dbReference>
<dbReference type="Gene3D" id="3.60.15.10">
    <property type="entry name" value="Ribonuclease Z/Hydroxyacylglutathione hydrolase-like"/>
    <property type="match status" value="1"/>
</dbReference>
<dbReference type="HAMAP" id="MF_01818">
    <property type="entry name" value="RNase_Z_BN"/>
    <property type="match status" value="1"/>
</dbReference>
<dbReference type="InterPro" id="IPR001279">
    <property type="entry name" value="Metallo-B-lactamas"/>
</dbReference>
<dbReference type="InterPro" id="IPR036866">
    <property type="entry name" value="RibonucZ/Hydroxyglut_hydro"/>
</dbReference>
<dbReference type="InterPro" id="IPR013469">
    <property type="entry name" value="Rnase_BN"/>
</dbReference>
<dbReference type="InterPro" id="IPR013471">
    <property type="entry name" value="RNase_Z/BN"/>
</dbReference>
<dbReference type="NCBIfam" id="NF000800">
    <property type="entry name" value="PRK00055.1-1"/>
    <property type="match status" value="1"/>
</dbReference>
<dbReference type="NCBIfam" id="NF000801">
    <property type="entry name" value="PRK00055.1-3"/>
    <property type="match status" value="1"/>
</dbReference>
<dbReference type="NCBIfam" id="TIGR02651">
    <property type="entry name" value="RNase_Z"/>
    <property type="match status" value="1"/>
</dbReference>
<dbReference type="NCBIfam" id="TIGR02649">
    <property type="entry name" value="true_RNase_BN"/>
    <property type="match status" value="1"/>
</dbReference>
<dbReference type="PANTHER" id="PTHR46018">
    <property type="entry name" value="ZINC PHOSPHODIESTERASE ELAC PROTEIN 1"/>
    <property type="match status" value="1"/>
</dbReference>
<dbReference type="PANTHER" id="PTHR46018:SF2">
    <property type="entry name" value="ZINC PHOSPHODIESTERASE ELAC PROTEIN 1"/>
    <property type="match status" value="1"/>
</dbReference>
<dbReference type="Pfam" id="PF12706">
    <property type="entry name" value="Lactamase_B_2"/>
    <property type="match status" value="2"/>
</dbReference>
<dbReference type="SUPFAM" id="SSF56281">
    <property type="entry name" value="Metallo-hydrolase/oxidoreductase"/>
    <property type="match status" value="1"/>
</dbReference>
<keyword id="KW-0255">Endonuclease</keyword>
<keyword id="KW-0269">Exonuclease</keyword>
<keyword id="KW-0378">Hydrolase</keyword>
<keyword id="KW-0479">Metal-binding</keyword>
<keyword id="KW-0540">Nuclease</keyword>
<keyword id="KW-0819">tRNA processing</keyword>
<keyword id="KW-0862">Zinc</keyword>
<organism>
    <name type="scientific">Salmonella paratyphi C (strain RKS4594)</name>
    <dbReference type="NCBI Taxonomy" id="476213"/>
    <lineage>
        <taxon>Bacteria</taxon>
        <taxon>Pseudomonadati</taxon>
        <taxon>Pseudomonadota</taxon>
        <taxon>Gammaproteobacteria</taxon>
        <taxon>Enterobacterales</taxon>
        <taxon>Enterobacteriaceae</taxon>
        <taxon>Salmonella</taxon>
    </lineage>
</organism>
<comment type="function">
    <text evidence="1">Zinc phosphodiesterase, which has both exoribonuclease and endoribonuclease activities.</text>
</comment>
<comment type="cofactor">
    <cofactor evidence="1">
        <name>Zn(2+)</name>
        <dbReference type="ChEBI" id="CHEBI:29105"/>
    </cofactor>
    <text evidence="1">Binds 2 Zn(2+) ions.</text>
</comment>
<comment type="subunit">
    <text evidence="1">Homodimer.</text>
</comment>
<comment type="similarity">
    <text evidence="1">Belongs to the RNase Z family. RNase BN subfamily.</text>
</comment>
<feature type="chain" id="PRO_1000187985" description="Ribonuclease BN">
    <location>
        <begin position="1"/>
        <end position="305"/>
    </location>
</feature>
<feature type="active site" description="Proton acceptor" evidence="1">
    <location>
        <position position="68"/>
    </location>
</feature>
<feature type="binding site" evidence="1">
    <location>
        <position position="64"/>
    </location>
    <ligand>
        <name>Zn(2+)</name>
        <dbReference type="ChEBI" id="CHEBI:29105"/>
        <label>1</label>
        <note>catalytic</note>
    </ligand>
</feature>
<feature type="binding site" evidence="1">
    <location>
        <position position="66"/>
    </location>
    <ligand>
        <name>Zn(2+)</name>
        <dbReference type="ChEBI" id="CHEBI:29105"/>
        <label>1</label>
        <note>catalytic</note>
    </ligand>
</feature>
<feature type="binding site" evidence="1">
    <location>
        <position position="68"/>
    </location>
    <ligand>
        <name>Zn(2+)</name>
        <dbReference type="ChEBI" id="CHEBI:29105"/>
        <label>2</label>
        <note>catalytic</note>
    </ligand>
</feature>
<feature type="binding site" evidence="1">
    <location>
        <position position="69"/>
    </location>
    <ligand>
        <name>Zn(2+)</name>
        <dbReference type="ChEBI" id="CHEBI:29105"/>
        <label>2</label>
        <note>catalytic</note>
    </ligand>
</feature>
<feature type="binding site" evidence="1">
    <location>
        <position position="141"/>
    </location>
    <ligand>
        <name>Zn(2+)</name>
        <dbReference type="ChEBI" id="CHEBI:29105"/>
        <label>1</label>
        <note>catalytic</note>
    </ligand>
</feature>
<feature type="binding site" evidence="1">
    <location>
        <position position="212"/>
    </location>
    <ligand>
        <name>Zn(2+)</name>
        <dbReference type="ChEBI" id="CHEBI:29105"/>
        <label>1</label>
        <note>catalytic</note>
    </ligand>
</feature>
<feature type="binding site" evidence="1">
    <location>
        <position position="212"/>
    </location>
    <ligand>
        <name>Zn(2+)</name>
        <dbReference type="ChEBI" id="CHEBI:29105"/>
        <label>2</label>
        <note>catalytic</note>
    </ligand>
</feature>
<feature type="binding site" evidence="1">
    <location>
        <position position="270"/>
    </location>
    <ligand>
        <name>Zn(2+)</name>
        <dbReference type="ChEBI" id="CHEBI:29105"/>
        <label>2</label>
        <note>catalytic</note>
    </ligand>
</feature>
<gene>
    <name evidence="1" type="primary">rbn</name>
    <name type="synonym">rnz</name>
    <name type="ordered locus">SPC_1398</name>
</gene>
<proteinExistence type="inferred from homology"/>
<accession>C0Q055</accession>
<protein>
    <recommendedName>
        <fullName evidence="1">Ribonuclease BN</fullName>
        <shortName evidence="1">RNase BN</shortName>
        <ecNumber evidence="1">3.1.-.-</ecNumber>
    </recommendedName>
    <alternativeName>
        <fullName evidence="1">Ribonuclease Z homolog</fullName>
        <shortName evidence="1">RNase Z homolog</shortName>
    </alternativeName>
</protein>
<sequence>MELIFLGTSAGVPTRSRNVTAILLHLQHPTQPGVWLFDCGEGTQHQMLNTAFHPGKLERIFISHLHGDHLFGLPGLLCSRSMAGPPHPLTVYGPQGVREFIATTLRLSGSWTDFPLQIEEISAGDILDDGLRKVTAFRLEHPLECYGYRVVEHDKPGALNARALKAAGVTPGPLFQALKAGKTVTLADGRQINGADYLAPAVAGKSVAIFGDTAPCEAALALAQGVDVMVHETTLDASMEEKANARGHSSTRQTATLAREAAVGRLIMTHISSRYDDKGCQRLLAECRAIFPATELAYDFSVFPV</sequence>
<reference key="1">
    <citation type="journal article" date="2009" name="PLoS ONE">
        <title>Salmonella paratyphi C: genetic divergence from Salmonella choleraesuis and pathogenic convergence with Salmonella typhi.</title>
        <authorList>
            <person name="Liu W.-Q."/>
            <person name="Feng Y."/>
            <person name="Wang Y."/>
            <person name="Zou Q.-H."/>
            <person name="Chen F."/>
            <person name="Guo J.-T."/>
            <person name="Peng Y.-H."/>
            <person name="Jin Y."/>
            <person name="Li Y.-G."/>
            <person name="Hu S.-N."/>
            <person name="Johnston R.N."/>
            <person name="Liu G.-R."/>
            <person name="Liu S.-L."/>
        </authorList>
    </citation>
    <scope>NUCLEOTIDE SEQUENCE [LARGE SCALE GENOMIC DNA]</scope>
    <source>
        <strain>RKS4594</strain>
    </source>
</reference>
<name>RBN_SALPC</name>